<accession>Q92954</accession>
<accession>Q6DNC4</accession>
<accession>Q6DNC5</accession>
<accession>Q6ZMZ5</accession>
<accession>Q9BX49</accession>
<keyword id="KW-0025">Alternative splicing</keyword>
<keyword id="KW-1015">Disulfide bond</keyword>
<keyword id="KW-0325">Glycoprotein</keyword>
<keyword id="KW-0654">Proteoglycan</keyword>
<keyword id="KW-1267">Proteomics identification</keyword>
<keyword id="KW-1185">Reference proteome</keyword>
<keyword id="KW-0677">Repeat</keyword>
<keyword id="KW-0964">Secreted</keyword>
<keyword id="KW-0732">Signal</keyword>
<evidence type="ECO:0000250" key="1"/>
<evidence type="ECO:0000255" key="2"/>
<evidence type="ECO:0000255" key="3">
    <source>
        <dbReference type="PROSITE-ProRule" id="PRU00350"/>
    </source>
</evidence>
<evidence type="ECO:0000256" key="4">
    <source>
        <dbReference type="SAM" id="MobiDB-lite"/>
    </source>
</evidence>
<evidence type="ECO:0000269" key="5">
    <source>
    </source>
</evidence>
<evidence type="ECO:0000269" key="6">
    <source>
    </source>
</evidence>
<evidence type="ECO:0000269" key="7">
    <source>
    </source>
</evidence>
<evidence type="ECO:0000269" key="8">
    <source>
    </source>
</evidence>
<evidence type="ECO:0000269" key="9">
    <source>
    </source>
</evidence>
<evidence type="ECO:0000269" key="10">
    <source>
    </source>
</evidence>
<evidence type="ECO:0000269" key="11">
    <source ref="1"/>
</evidence>
<evidence type="ECO:0000303" key="12">
    <source>
    </source>
</evidence>
<evidence type="ECO:0000303" key="13">
    <source>
    </source>
</evidence>
<evidence type="ECO:0000305" key="14"/>
<comment type="function">
    <text>Plays a role in boundary lubrication within articulating joints. Prevents protein deposition onto cartilage from synovial fluid by controlling adhesion-dependent synovial growth and inhibiting the adhesion of synovial cells to the cartilage surface.</text>
</comment>
<comment type="function">
    <text>Isoform F plays a role as a growth factor acting on the primitive cells of both hematopoietic and endothelial cell lineages.</text>
</comment>
<comment type="subunit">
    <text evidence="1">Homodimer; disulfide-linked.</text>
</comment>
<comment type="subcellular location">
    <subcellularLocation>
        <location evidence="7 10">Secreted</location>
    </subcellularLocation>
</comment>
<comment type="alternative products">
    <event type="alternative splicing"/>
    <isoform>
        <id>Q92954-1</id>
        <name>A</name>
        <sequence type="displayed"/>
    </isoform>
    <isoform>
        <id>Q92954-2</id>
        <name>B</name>
        <sequence type="described" ref="VSP_016467"/>
    </isoform>
    <isoform>
        <id>Q92954-3</id>
        <name>C</name>
        <sequence type="described" ref="VSP_016468"/>
    </isoform>
    <isoform>
        <id>Q92954-4</id>
        <name>D</name>
        <sequence type="described" ref="VSP_016467 VSP_016468"/>
    </isoform>
    <isoform>
        <id>Q92954-5</id>
        <name>E</name>
        <sequence type="described" ref="VSP_016467 VSP_016470"/>
    </isoform>
    <isoform>
        <id>Q92954-6</id>
        <name>F</name>
        <name>Hemangiopoietin</name>
        <name>HAPO</name>
        <sequence type="described" ref="VSP_016469"/>
    </isoform>
</comment>
<comment type="tissue specificity">
    <text evidence="5 6">Highly expressed in synovial tissue, cartilage and liver and weakly in heart and lung. Isoform B is expressed in kidney, lung, liver, heart and brain. Isoform C and isoform D are widely expressed.</text>
</comment>
<comment type="PTM">
    <text evidence="8">N-glycosylated (PubMed:16335952).</text>
</comment>
<comment type="PTM">
    <text evidence="9">O-glycosylated; contains glycosaminoglycan chondroitin sulfate and keratan sulfate. O-glycosylated with sialylated oligosaccharides which are predominantly represented by the monosialylated core type I structure, NeuNAcalpha2-3Galbeta1-3GalNAc, with smaller amounts of disialylated O-glycans (PubMed:25187573).</text>
</comment>
<comment type="PTM">
    <text evidence="1">The disulfide bond between Cys-1146 and Cys-1403 is essential for protein cleavage.</text>
</comment>
<comment type="PTM">
    <text evidence="10">Proteolytically cleaved by cathepsin CTSG.</text>
</comment>
<comment type="disease" evidence="5">
    <disease id="DI-01313">
        <name>Camptodactyly-arthropathy-coxa vara-pericarditis syndrome</name>
        <acronym>CACP</acronym>
        <description>An autosomal recessive disorder characterized by the association of congenital or early-onset camptodactyly and non-inflammatory arthropathy with synovial hyperplasia. Individuals with CACP have normal appearing joints at birth but with advancing age develop joint failure, non-inflammatory synoviocyte hyperplasia and subintimal fibrosis of the synovial capsule. Some patients also manifest progressive coxa vara deformity and/or non-inflammatory pericardial or pleural effusions.</description>
        <dbReference type="MIM" id="208250"/>
    </disease>
    <text>The disease is caused by variants affecting the gene represented in this entry.</text>
</comment>
<comment type="miscellaneous">
    <text evidence="1">Different forms varying in molecular weight have been observed. Such forms are possibly due to different levels of glycosylation and protein cleavage (By similarity).</text>
</comment>
<name>PRG4_HUMAN</name>
<dbReference type="EMBL" id="U70136">
    <property type="protein sequence ID" value="AAB09089.1"/>
    <property type="molecule type" value="mRNA"/>
</dbReference>
<dbReference type="EMBL" id="AK131434">
    <property type="protein sequence ID" value="BAD18580.1"/>
    <property type="molecule type" value="mRNA"/>
</dbReference>
<dbReference type="EMBL" id="AL133553">
    <property type="status" value="NOT_ANNOTATED_CDS"/>
    <property type="molecule type" value="Genomic_DNA"/>
</dbReference>
<dbReference type="EMBL" id="KF455089">
    <property type="status" value="NOT_ANNOTATED_CDS"/>
    <property type="molecule type" value="Genomic_DNA"/>
</dbReference>
<dbReference type="EMBL" id="AY653037">
    <property type="protein sequence ID" value="AAT74745.1"/>
    <property type="molecule type" value="mRNA"/>
</dbReference>
<dbReference type="EMBL" id="AY653038">
    <property type="protein sequence ID" value="AAT74746.1"/>
    <property type="molecule type" value="mRNA"/>
</dbReference>
<dbReference type="CCDS" id="CCDS1369.1">
    <molecule id="Q92954-1"/>
</dbReference>
<dbReference type="CCDS" id="CCDS44287.1">
    <molecule id="Q92954-3"/>
</dbReference>
<dbReference type="CCDS" id="CCDS44288.1">
    <molecule id="Q92954-2"/>
</dbReference>
<dbReference type="CCDS" id="CCDS81411.1">
    <molecule id="Q92954-6"/>
</dbReference>
<dbReference type="RefSeq" id="NP_001121180.2">
    <molecule id="Q92954-2"/>
    <property type="nucleotide sequence ID" value="NM_001127708.3"/>
</dbReference>
<dbReference type="RefSeq" id="NP_001121181.2">
    <molecule id="Q92954-3"/>
    <property type="nucleotide sequence ID" value="NM_001127709.3"/>
</dbReference>
<dbReference type="RefSeq" id="NP_001121182.2">
    <molecule id="Q92954-4"/>
    <property type="nucleotide sequence ID" value="NM_001127710.3"/>
</dbReference>
<dbReference type="RefSeq" id="NP_001290161.1">
    <molecule id="Q92954-6"/>
    <property type="nucleotide sequence ID" value="NM_001303232.2"/>
</dbReference>
<dbReference type="RefSeq" id="NP_005798.3">
    <molecule id="Q92954-1"/>
    <property type="nucleotide sequence ID" value="NM_005807.6"/>
</dbReference>
<dbReference type="RefSeq" id="XP_016855491.1">
    <property type="nucleotide sequence ID" value="XM_017000002.1"/>
</dbReference>
<dbReference type="RefSeq" id="XP_016855492.1">
    <property type="nucleotide sequence ID" value="XM_017000003.1"/>
</dbReference>
<dbReference type="SMR" id="Q92954"/>
<dbReference type="BioGRID" id="115511">
    <property type="interactions" value="9"/>
</dbReference>
<dbReference type="FunCoup" id="Q92954">
    <property type="interactions" value="48"/>
</dbReference>
<dbReference type="IntAct" id="Q92954">
    <property type="interactions" value="6"/>
</dbReference>
<dbReference type="MINT" id="Q92954"/>
<dbReference type="STRING" id="9606.ENSP00000399679"/>
<dbReference type="CarbonylDB" id="Q92954"/>
<dbReference type="GlyConnect" id="762">
    <property type="glycosylation" value="1 N-Linked glycan (1 site), 7 O-Linked glycans (43 sites)"/>
</dbReference>
<dbReference type="GlyCosmos" id="Q92954">
    <property type="glycosylation" value="119 sites, 18 glycans"/>
</dbReference>
<dbReference type="GlyGen" id="Q92954">
    <property type="glycosylation" value="125 sites, 5 N-linked glycans (2 sites), 18 O-linked glycans (61 sites)"/>
</dbReference>
<dbReference type="iPTMnet" id="Q92954"/>
<dbReference type="PhosphoSitePlus" id="Q92954"/>
<dbReference type="BioMuta" id="PRG4"/>
<dbReference type="DMDM" id="83288393"/>
<dbReference type="jPOST" id="Q92954"/>
<dbReference type="MassIVE" id="Q92954"/>
<dbReference type="PaxDb" id="9606-ENSP00000399679"/>
<dbReference type="PeptideAtlas" id="Q92954"/>
<dbReference type="ProteomicsDB" id="75624">
    <molecule id="Q92954-1"/>
</dbReference>
<dbReference type="ProteomicsDB" id="75625">
    <molecule id="Q92954-2"/>
</dbReference>
<dbReference type="ProteomicsDB" id="75626">
    <molecule id="Q92954-3"/>
</dbReference>
<dbReference type="ProteomicsDB" id="75627">
    <molecule id="Q92954-4"/>
</dbReference>
<dbReference type="ProteomicsDB" id="75628">
    <molecule id="Q92954-5"/>
</dbReference>
<dbReference type="ProteomicsDB" id="75629">
    <molecule id="Q92954-6"/>
</dbReference>
<dbReference type="Pumba" id="Q92954"/>
<dbReference type="Antibodypedia" id="34454">
    <property type="antibodies" value="178 antibodies from 28 providers"/>
</dbReference>
<dbReference type="DNASU" id="10216"/>
<dbReference type="Ensembl" id="ENST00000367483.8">
    <molecule id="Q92954-2"/>
    <property type="protein sequence ID" value="ENSP00000356453.4"/>
    <property type="gene ID" value="ENSG00000116690.13"/>
</dbReference>
<dbReference type="Ensembl" id="ENST00000367485.4">
    <molecule id="Q92954-3"/>
    <property type="protein sequence ID" value="ENSP00000356455.4"/>
    <property type="gene ID" value="ENSG00000116690.13"/>
</dbReference>
<dbReference type="Ensembl" id="ENST00000445192.7">
    <molecule id="Q92954-1"/>
    <property type="protein sequence ID" value="ENSP00000399679.3"/>
    <property type="gene ID" value="ENSG00000116690.13"/>
</dbReference>
<dbReference type="Ensembl" id="ENST00000635041.1">
    <molecule id="Q92954-6"/>
    <property type="protein sequence ID" value="ENSP00000489292.1"/>
    <property type="gene ID" value="ENSG00000116690.13"/>
</dbReference>
<dbReference type="GeneID" id="10216"/>
<dbReference type="KEGG" id="hsa:10216"/>
<dbReference type="MANE-Select" id="ENST00000445192.7">
    <property type="protein sequence ID" value="ENSP00000399679.3"/>
    <property type="RefSeq nucleotide sequence ID" value="NM_005807.6"/>
    <property type="RefSeq protein sequence ID" value="NP_005798.3"/>
</dbReference>
<dbReference type="UCSC" id="uc001grt.5">
    <molecule id="Q92954-1"/>
    <property type="organism name" value="human"/>
</dbReference>
<dbReference type="AGR" id="HGNC:9364"/>
<dbReference type="CTD" id="10216"/>
<dbReference type="DisGeNET" id="10216"/>
<dbReference type="GeneCards" id="PRG4"/>
<dbReference type="HGNC" id="HGNC:9364">
    <property type="gene designation" value="PRG4"/>
</dbReference>
<dbReference type="HPA" id="ENSG00000116690">
    <property type="expression patterns" value="Group enriched (adipose tissue, liver)"/>
</dbReference>
<dbReference type="MalaCards" id="PRG4"/>
<dbReference type="MIM" id="208250">
    <property type="type" value="phenotype"/>
</dbReference>
<dbReference type="MIM" id="604283">
    <property type="type" value="gene"/>
</dbReference>
<dbReference type="neXtProt" id="NX_Q92954"/>
<dbReference type="OpenTargets" id="ENSG00000116690"/>
<dbReference type="Orphanet" id="2848">
    <property type="disease" value="Camptodactyly-arthropathy-coxa-vara-pericarditis syndrome"/>
</dbReference>
<dbReference type="PharmGKB" id="PA33736"/>
<dbReference type="VEuPathDB" id="HostDB:ENSG00000116690"/>
<dbReference type="eggNOG" id="KOG1565">
    <property type="taxonomic scope" value="Eukaryota"/>
</dbReference>
<dbReference type="GeneTree" id="ENSGT00530000063751"/>
<dbReference type="HOGENOM" id="CLU_008106_0_0_1"/>
<dbReference type="InParanoid" id="Q92954"/>
<dbReference type="OMA" id="RRITDVW"/>
<dbReference type="OrthoDB" id="413699at2759"/>
<dbReference type="PAN-GO" id="Q92954">
    <property type="GO annotations" value="2 GO annotations based on evolutionary models"/>
</dbReference>
<dbReference type="PhylomeDB" id="Q92954"/>
<dbReference type="TreeFam" id="TF332780"/>
<dbReference type="PathwayCommons" id="Q92954"/>
<dbReference type="SignaLink" id="Q92954"/>
<dbReference type="BioGRID-ORCS" id="10216">
    <property type="hits" value="23 hits in 1138 CRISPR screens"/>
</dbReference>
<dbReference type="ChiTaRS" id="PRG4">
    <property type="organism name" value="human"/>
</dbReference>
<dbReference type="GeneWiki" id="PRG4"/>
<dbReference type="GenomeRNAi" id="10216"/>
<dbReference type="Pharos" id="Q92954">
    <property type="development level" value="Tbio"/>
</dbReference>
<dbReference type="PRO" id="PR:Q92954"/>
<dbReference type="Proteomes" id="UP000005640">
    <property type="component" value="Chromosome 1"/>
</dbReference>
<dbReference type="RNAct" id="Q92954">
    <property type="molecule type" value="protein"/>
</dbReference>
<dbReference type="Bgee" id="ENSG00000116690">
    <property type="expression patterns" value="Expressed in synovial joint and 114 other cell types or tissues"/>
</dbReference>
<dbReference type="ExpressionAtlas" id="Q92954">
    <property type="expression patterns" value="baseline and differential"/>
</dbReference>
<dbReference type="GO" id="GO:0062023">
    <property type="term" value="C:collagen-containing extracellular matrix"/>
    <property type="evidence" value="ECO:0007005"/>
    <property type="project" value="BHF-UCL"/>
</dbReference>
<dbReference type="GO" id="GO:0005615">
    <property type="term" value="C:extracellular space"/>
    <property type="evidence" value="ECO:0000318"/>
    <property type="project" value="GO_Central"/>
</dbReference>
<dbReference type="GO" id="GO:0030247">
    <property type="term" value="F:polysaccharide binding"/>
    <property type="evidence" value="ECO:0007669"/>
    <property type="project" value="InterPro"/>
</dbReference>
<dbReference type="GO" id="GO:0005044">
    <property type="term" value="F:scavenger receptor activity"/>
    <property type="evidence" value="ECO:0007669"/>
    <property type="project" value="InterPro"/>
</dbReference>
<dbReference type="GO" id="GO:0006955">
    <property type="term" value="P:immune response"/>
    <property type="evidence" value="ECO:0007669"/>
    <property type="project" value="InterPro"/>
</dbReference>
<dbReference type="CDD" id="cd00094">
    <property type="entry name" value="HX"/>
    <property type="match status" value="1"/>
</dbReference>
<dbReference type="FunFam" id="4.10.410.20:FF:000009">
    <property type="entry name" value="Proteoglycan 4"/>
    <property type="match status" value="1"/>
</dbReference>
<dbReference type="Gene3D" id="4.10.410.20">
    <property type="match status" value="2"/>
</dbReference>
<dbReference type="Gene3D" id="2.110.10.10">
    <property type="entry name" value="Hemopexin-like domain"/>
    <property type="match status" value="1"/>
</dbReference>
<dbReference type="InterPro" id="IPR051298">
    <property type="entry name" value="Heme_transport/Cell_adhesion"/>
</dbReference>
<dbReference type="InterPro" id="IPR000585">
    <property type="entry name" value="Hemopexin-like_dom"/>
</dbReference>
<dbReference type="InterPro" id="IPR036375">
    <property type="entry name" value="Hemopexin-like_dom_sf"/>
</dbReference>
<dbReference type="InterPro" id="IPR018487">
    <property type="entry name" value="Hemopexin-like_repeat"/>
</dbReference>
<dbReference type="InterPro" id="IPR018486">
    <property type="entry name" value="Hemopexin_CS"/>
</dbReference>
<dbReference type="InterPro" id="IPR020436">
    <property type="entry name" value="SMB_chordata"/>
</dbReference>
<dbReference type="InterPro" id="IPR036024">
    <property type="entry name" value="Somatomedin_B-like_dom_sf"/>
</dbReference>
<dbReference type="InterPro" id="IPR001212">
    <property type="entry name" value="Somatomedin_B_dom"/>
</dbReference>
<dbReference type="PANTHER" id="PTHR22917">
    <property type="entry name" value="HEMOPEXIN DOMAIN-CONTAINING PROTEIN"/>
    <property type="match status" value="1"/>
</dbReference>
<dbReference type="PANTHER" id="PTHR22917:SF1">
    <property type="entry name" value="PROTEOGLYCAN 4"/>
    <property type="match status" value="1"/>
</dbReference>
<dbReference type="Pfam" id="PF00045">
    <property type="entry name" value="Hemopexin"/>
    <property type="match status" value="1"/>
</dbReference>
<dbReference type="Pfam" id="PF01033">
    <property type="entry name" value="Somatomedin_B"/>
    <property type="match status" value="2"/>
</dbReference>
<dbReference type="PRINTS" id="PR00022">
    <property type="entry name" value="SOMATOMEDINB"/>
</dbReference>
<dbReference type="SMART" id="SM00120">
    <property type="entry name" value="HX"/>
    <property type="match status" value="2"/>
</dbReference>
<dbReference type="SMART" id="SM00201">
    <property type="entry name" value="SO"/>
    <property type="match status" value="2"/>
</dbReference>
<dbReference type="SUPFAM" id="SSF50923">
    <property type="entry name" value="Hemopexin-like domain"/>
    <property type="match status" value="1"/>
</dbReference>
<dbReference type="SUPFAM" id="SSF90188">
    <property type="entry name" value="Somatomedin B domain"/>
    <property type="match status" value="2"/>
</dbReference>
<dbReference type="PROSITE" id="PS00024">
    <property type="entry name" value="HEMOPEXIN"/>
    <property type="match status" value="1"/>
</dbReference>
<dbReference type="PROSITE" id="PS51642">
    <property type="entry name" value="HEMOPEXIN_2"/>
    <property type="match status" value="2"/>
</dbReference>
<dbReference type="PROSITE" id="PS00524">
    <property type="entry name" value="SMB_1"/>
    <property type="match status" value="2"/>
</dbReference>
<dbReference type="PROSITE" id="PS50958">
    <property type="entry name" value="SMB_2"/>
    <property type="match status" value="2"/>
</dbReference>
<sequence>MAWKTLPIYLLLLLSVFVIQQVSSQDLSSCAGRCGEGYSRDATCNCDYNCQHYMECCPDFKRVCTAELSCKGRCFESFERGRECDCDAQCKKYDKCCPDYESFCAEVHNPTSPPSSKKAPPPSGASQTIKSTTKRSPKPPNKKKTKKVIESEEITEEHSVSENQESSSSSSSSSSSSTIRKIKSSKNSAANRELQKKLKVKDNKKNRTKKKPTPKPPVVDEAGSGLDNGDFKVTTPDTSTTQHNKVSTSPKITTAKPINPRPSLPPNSDTSKETSLTVNKETTVETKETTTTNKQTSTDGKEKTTSAKETQSIEKTSAKDLAPTSKVLAKPTPKAETTTKGPALTTPKEPTPTTPKEPASTTPKEPTPTTIKSAPTTPKEPAPTTTKSAPTTPKEPAPTTTKEPAPTTPKEPAPTTTKEPAPTTTKSAPTTPKEPAPTTPKKPAPTTPKEPAPTTPKEPTPTTPKEPAPTTKEPAPTTPKEPAPTAPKKPAPTTPKEPAPTTPKEPAPTTTKEPSPTTPKEPAPTTTKSAPTTTKEPAPTTTKSAPTTPKEPSPTTTKEPAPTTPKEPAPTTPKKPAPTTPKEPAPTTPKEPAPTTTKKPAPTTPKEPAPTTPKETAPTTPKKLTPTTPEKLAPTTPEKPAPTTPEELAPTTPEEPTPTTPEEPAPTTPKAAAPNTPKEPAPTTPKEPAPTTPKEPAPTTPKETAPTTPKGTAPTTLKEPAPTTPKKPAPKELAPTTTKEPTSTTSDKPAPTTPKGTAPTTPKEPAPTTPKEPAPTTPKGTAPTTLKEPAPTTPKKPAPKELAPTTTKGPTSTTSDKPAPTTPKETAPTTPKEPAPTTPKKPAPTTPETPPPTTSEVSTPTTTKEPTTIHKSPDESTPELSAEPTPKALENSPKEPGVPTTKTPAATKPEMTTTAKDKTTERDLRTTPETTTAAPKMTKETATTTEKTTESKITATTTQVTSTTTQDTTPFKITTLKTTTLAPKVTTTKKTITTTEIMNKPEETAKPKDRATNSKATTPKPQKPTKAPKKPTSTKKPKTMPRVRKPKTTPTPRKMTSTMPELNPTSRIAEAMLQTTTRPNQTPNSKLVEVNPKSEDAGGAEGETPHMLLRPHVFMPEVTPDMDYLPRVPNQGIIINPMLSDETNICNGKPVDGLTTLRNGTLVAFRGHYFWMLSPFSPPSPARRITEVWGIPSPIDTVFTRCNCEGKTFFFKDSQYWRFTNDIKDAGYPKPIFKGFGGLTGQIVAALSTAKYKNWPESVYFFKRGGSIQQYIYKQEPVQKCPGRRPALNYPVYGETTQVRRRRFERAIGPSQTHTIRIQYSPARLAYQDKGVLHNEVKVSILWRGLPNVVTSAISLPNIRKPDGYDYYAFSKDQYYNIDVPSRTARAITTRSGQTLSKVWYNCP</sequence>
<protein>
    <recommendedName>
        <fullName>Proteoglycan 4</fullName>
    </recommendedName>
    <alternativeName>
        <fullName>Lubricin</fullName>
    </alternativeName>
    <alternativeName>
        <fullName>Megakaryocyte-stimulating factor</fullName>
    </alternativeName>
    <alternativeName>
        <fullName>Superficial zone proteoglycan</fullName>
    </alternativeName>
    <component>
        <recommendedName>
            <fullName>Proteoglycan 4 C-terminal part</fullName>
        </recommendedName>
    </component>
</protein>
<reference key="1">
    <citation type="submission" date="1996-09" db="EMBL/GenBank/DDBJ databases">
        <authorList>
            <person name="Turner K.J."/>
            <person name="Fitz L.J."/>
            <person name="Temple P."/>
            <person name="Jacobs K."/>
            <person name="Larson D."/>
            <person name="Leary A.C."/>
            <person name="Kelleher K."/>
            <person name="Giannotti J."/>
            <person name="Calvetti J."/>
            <person name="Fitzgerald M."/>
            <person name="Kriz M.J."/>
            <person name="Ferenz C."/>
            <person name="Grobholz J."/>
            <person name="Fraser H."/>
            <person name="Bean K."/>
            <person name="Norton C.R."/>
            <person name="Gesner T."/>
            <person name="Bhatia S."/>
            <person name="Kriz R."/>
            <person name="Hewick R."/>
            <person name="Clark S.C."/>
        </authorList>
    </citation>
    <scope>NUCLEOTIDE SEQUENCE [MRNA] (ISOFORM A)</scope>
    <scope>VARIANTS TRP-180 AND MET-1296</scope>
</reference>
<reference key="2">
    <citation type="journal article" date="2004" name="Nat. Genet.">
        <title>Complete sequencing and characterization of 21,243 full-length human cDNAs.</title>
        <authorList>
            <person name="Ota T."/>
            <person name="Suzuki Y."/>
            <person name="Nishikawa T."/>
            <person name="Otsuki T."/>
            <person name="Sugiyama T."/>
            <person name="Irie R."/>
            <person name="Wakamatsu A."/>
            <person name="Hayashi K."/>
            <person name="Sato H."/>
            <person name="Nagai K."/>
            <person name="Kimura K."/>
            <person name="Makita H."/>
            <person name="Sekine M."/>
            <person name="Obayashi M."/>
            <person name="Nishi T."/>
            <person name="Shibahara T."/>
            <person name="Tanaka T."/>
            <person name="Ishii S."/>
            <person name="Yamamoto J."/>
            <person name="Saito K."/>
            <person name="Kawai Y."/>
            <person name="Isono Y."/>
            <person name="Nakamura Y."/>
            <person name="Nagahari K."/>
            <person name="Murakami K."/>
            <person name="Yasuda T."/>
            <person name="Iwayanagi T."/>
            <person name="Wagatsuma M."/>
            <person name="Shiratori A."/>
            <person name="Sudo H."/>
            <person name="Hosoiri T."/>
            <person name="Kaku Y."/>
            <person name="Kodaira H."/>
            <person name="Kondo H."/>
            <person name="Sugawara M."/>
            <person name="Takahashi M."/>
            <person name="Kanda K."/>
            <person name="Yokoi T."/>
            <person name="Furuya T."/>
            <person name="Kikkawa E."/>
            <person name="Omura Y."/>
            <person name="Abe K."/>
            <person name="Kamihara K."/>
            <person name="Katsuta N."/>
            <person name="Sato K."/>
            <person name="Tanikawa M."/>
            <person name="Yamazaki M."/>
            <person name="Ninomiya K."/>
            <person name="Ishibashi T."/>
            <person name="Yamashita H."/>
            <person name="Murakawa K."/>
            <person name="Fujimori K."/>
            <person name="Tanai H."/>
            <person name="Kimata M."/>
            <person name="Watanabe M."/>
            <person name="Hiraoka S."/>
            <person name="Chiba Y."/>
            <person name="Ishida S."/>
            <person name="Ono Y."/>
            <person name="Takiguchi S."/>
            <person name="Watanabe S."/>
            <person name="Yosida M."/>
            <person name="Hotuta T."/>
            <person name="Kusano J."/>
            <person name="Kanehori K."/>
            <person name="Takahashi-Fujii A."/>
            <person name="Hara H."/>
            <person name="Tanase T.-O."/>
            <person name="Nomura Y."/>
            <person name="Togiya S."/>
            <person name="Komai F."/>
            <person name="Hara R."/>
            <person name="Takeuchi K."/>
            <person name="Arita M."/>
            <person name="Imose N."/>
            <person name="Musashino K."/>
            <person name="Yuuki H."/>
            <person name="Oshima A."/>
            <person name="Sasaki N."/>
            <person name="Aotsuka S."/>
            <person name="Yoshikawa Y."/>
            <person name="Matsunawa H."/>
            <person name="Ichihara T."/>
            <person name="Shiohata N."/>
            <person name="Sano S."/>
            <person name="Moriya S."/>
            <person name="Momiyama H."/>
            <person name="Satoh N."/>
            <person name="Takami S."/>
            <person name="Terashima Y."/>
            <person name="Suzuki O."/>
            <person name="Nakagawa S."/>
            <person name="Senoh A."/>
            <person name="Mizoguchi H."/>
            <person name="Goto Y."/>
            <person name="Shimizu F."/>
            <person name="Wakebe H."/>
            <person name="Hishigaki H."/>
            <person name="Watanabe T."/>
            <person name="Sugiyama A."/>
            <person name="Takemoto M."/>
            <person name="Kawakami B."/>
            <person name="Yamazaki M."/>
            <person name="Watanabe K."/>
            <person name="Kumagai A."/>
            <person name="Itakura S."/>
            <person name="Fukuzumi Y."/>
            <person name="Fujimori Y."/>
            <person name="Komiyama M."/>
            <person name="Tashiro H."/>
            <person name="Tanigami A."/>
            <person name="Fujiwara T."/>
            <person name="Ono T."/>
            <person name="Yamada K."/>
            <person name="Fujii Y."/>
            <person name="Ozaki K."/>
            <person name="Hirao M."/>
            <person name="Ohmori Y."/>
            <person name="Kawabata A."/>
            <person name="Hikiji T."/>
            <person name="Kobatake N."/>
            <person name="Inagaki H."/>
            <person name="Ikema Y."/>
            <person name="Okamoto S."/>
            <person name="Okitani R."/>
            <person name="Kawakami T."/>
            <person name="Noguchi S."/>
            <person name="Itoh T."/>
            <person name="Shigeta K."/>
            <person name="Senba T."/>
            <person name="Matsumura K."/>
            <person name="Nakajima Y."/>
            <person name="Mizuno T."/>
            <person name="Morinaga M."/>
            <person name="Sasaki M."/>
            <person name="Togashi T."/>
            <person name="Oyama M."/>
            <person name="Hata H."/>
            <person name="Watanabe M."/>
            <person name="Komatsu T."/>
            <person name="Mizushima-Sugano J."/>
            <person name="Satoh T."/>
            <person name="Shirai Y."/>
            <person name="Takahashi Y."/>
            <person name="Nakagawa K."/>
            <person name="Okumura K."/>
            <person name="Nagase T."/>
            <person name="Nomura N."/>
            <person name="Kikuchi H."/>
            <person name="Masuho Y."/>
            <person name="Yamashita R."/>
            <person name="Nakai K."/>
            <person name="Yada T."/>
            <person name="Nakamura Y."/>
            <person name="Ohara O."/>
            <person name="Isogai T."/>
            <person name="Sugano S."/>
        </authorList>
    </citation>
    <scope>NUCLEOTIDE SEQUENCE [LARGE SCALE MRNA] (ISOFORM E)</scope>
    <source>
        <tissue>Synovial cell</tissue>
    </source>
</reference>
<reference key="3">
    <citation type="journal article" date="2006" name="Nature">
        <title>The DNA sequence and biological annotation of human chromosome 1.</title>
        <authorList>
            <person name="Gregory S.G."/>
            <person name="Barlow K.F."/>
            <person name="McLay K.E."/>
            <person name="Kaul R."/>
            <person name="Swarbreck D."/>
            <person name="Dunham A."/>
            <person name="Scott C.E."/>
            <person name="Howe K.L."/>
            <person name="Woodfine K."/>
            <person name="Spencer C.C.A."/>
            <person name="Jones M.C."/>
            <person name="Gillson C."/>
            <person name="Searle S."/>
            <person name="Zhou Y."/>
            <person name="Kokocinski F."/>
            <person name="McDonald L."/>
            <person name="Evans R."/>
            <person name="Phillips K."/>
            <person name="Atkinson A."/>
            <person name="Cooper R."/>
            <person name="Jones C."/>
            <person name="Hall R.E."/>
            <person name="Andrews T.D."/>
            <person name="Lloyd C."/>
            <person name="Ainscough R."/>
            <person name="Almeida J.P."/>
            <person name="Ambrose K.D."/>
            <person name="Anderson F."/>
            <person name="Andrew R.W."/>
            <person name="Ashwell R.I.S."/>
            <person name="Aubin K."/>
            <person name="Babbage A.K."/>
            <person name="Bagguley C.L."/>
            <person name="Bailey J."/>
            <person name="Beasley H."/>
            <person name="Bethel G."/>
            <person name="Bird C.P."/>
            <person name="Bray-Allen S."/>
            <person name="Brown J.Y."/>
            <person name="Brown A.J."/>
            <person name="Buckley D."/>
            <person name="Burton J."/>
            <person name="Bye J."/>
            <person name="Carder C."/>
            <person name="Chapman J.C."/>
            <person name="Clark S.Y."/>
            <person name="Clarke G."/>
            <person name="Clee C."/>
            <person name="Cobley V."/>
            <person name="Collier R.E."/>
            <person name="Corby N."/>
            <person name="Coville G.J."/>
            <person name="Davies J."/>
            <person name="Deadman R."/>
            <person name="Dunn M."/>
            <person name="Earthrowl M."/>
            <person name="Ellington A.G."/>
            <person name="Errington H."/>
            <person name="Frankish A."/>
            <person name="Frankland J."/>
            <person name="French L."/>
            <person name="Garner P."/>
            <person name="Garnett J."/>
            <person name="Gay L."/>
            <person name="Ghori M.R.J."/>
            <person name="Gibson R."/>
            <person name="Gilby L.M."/>
            <person name="Gillett W."/>
            <person name="Glithero R.J."/>
            <person name="Grafham D.V."/>
            <person name="Griffiths C."/>
            <person name="Griffiths-Jones S."/>
            <person name="Grocock R."/>
            <person name="Hammond S."/>
            <person name="Harrison E.S.I."/>
            <person name="Hart E."/>
            <person name="Haugen E."/>
            <person name="Heath P.D."/>
            <person name="Holmes S."/>
            <person name="Holt K."/>
            <person name="Howden P.J."/>
            <person name="Hunt A.R."/>
            <person name="Hunt S.E."/>
            <person name="Hunter G."/>
            <person name="Isherwood J."/>
            <person name="James R."/>
            <person name="Johnson C."/>
            <person name="Johnson D."/>
            <person name="Joy A."/>
            <person name="Kay M."/>
            <person name="Kershaw J.K."/>
            <person name="Kibukawa M."/>
            <person name="Kimberley A.M."/>
            <person name="King A."/>
            <person name="Knights A.J."/>
            <person name="Lad H."/>
            <person name="Laird G."/>
            <person name="Lawlor S."/>
            <person name="Leongamornlert D.A."/>
            <person name="Lloyd D.M."/>
            <person name="Loveland J."/>
            <person name="Lovell J."/>
            <person name="Lush M.J."/>
            <person name="Lyne R."/>
            <person name="Martin S."/>
            <person name="Mashreghi-Mohammadi M."/>
            <person name="Matthews L."/>
            <person name="Matthews N.S.W."/>
            <person name="McLaren S."/>
            <person name="Milne S."/>
            <person name="Mistry S."/>
            <person name="Moore M.J.F."/>
            <person name="Nickerson T."/>
            <person name="O'Dell C.N."/>
            <person name="Oliver K."/>
            <person name="Palmeiri A."/>
            <person name="Palmer S.A."/>
            <person name="Parker A."/>
            <person name="Patel D."/>
            <person name="Pearce A.V."/>
            <person name="Peck A.I."/>
            <person name="Pelan S."/>
            <person name="Phelps K."/>
            <person name="Phillimore B.J."/>
            <person name="Plumb R."/>
            <person name="Rajan J."/>
            <person name="Raymond C."/>
            <person name="Rouse G."/>
            <person name="Saenphimmachak C."/>
            <person name="Sehra H.K."/>
            <person name="Sheridan E."/>
            <person name="Shownkeen R."/>
            <person name="Sims S."/>
            <person name="Skuce C.D."/>
            <person name="Smith M."/>
            <person name="Steward C."/>
            <person name="Subramanian S."/>
            <person name="Sycamore N."/>
            <person name="Tracey A."/>
            <person name="Tromans A."/>
            <person name="Van Helmond Z."/>
            <person name="Wall M."/>
            <person name="Wallis J.M."/>
            <person name="White S."/>
            <person name="Whitehead S.L."/>
            <person name="Wilkinson J.E."/>
            <person name="Willey D.L."/>
            <person name="Williams H."/>
            <person name="Wilming L."/>
            <person name="Wray P.W."/>
            <person name="Wu Z."/>
            <person name="Coulson A."/>
            <person name="Vaudin M."/>
            <person name="Sulston J.E."/>
            <person name="Durbin R.M."/>
            <person name="Hubbard T."/>
            <person name="Wooster R."/>
            <person name="Dunham I."/>
            <person name="Carter N.P."/>
            <person name="McVean G."/>
            <person name="Ross M.T."/>
            <person name="Harrow J."/>
            <person name="Olson M.V."/>
            <person name="Beck S."/>
            <person name="Rogers J."/>
            <person name="Bentley D.R."/>
        </authorList>
    </citation>
    <scope>NUCLEOTIDE SEQUENCE [LARGE SCALE GENOMIC DNA]</scope>
</reference>
<reference key="4">
    <citation type="submission" date="2004-06" db="EMBL/GenBank/DDBJ databases">
        <title>Cloning and production of recombinant PRG4/cartilage superficial zone proteoglycan (SZP) N- and C-terminal domains.</title>
        <authorList>
            <person name="Jones A.R."/>
            <person name="Hughes C.E."/>
            <person name="Flannery C.R."/>
            <person name="Caterson B."/>
        </authorList>
    </citation>
    <scope>NUCLEOTIDE SEQUENCE [MRNA] OF 32-193 AND 1148-1398</scope>
</reference>
<reference key="5">
    <citation type="journal article" date="1999" name="Biochem. Biophys. Res. Commun.">
        <title>Articular cartilage superficial zone protein (SZP) is homologous to megakaryocyte stimulating factor precursor and is a multifunctional proteoglycan with potential growth-promoting, cytoprotective, and lubricating properties in cartilage metabolism.</title>
        <authorList>
            <person name="Flannery C.R."/>
            <person name="Hughes C.E."/>
            <person name="Schumacher B.L."/>
            <person name="Tudor D."/>
            <person name="Aydelotte M.B."/>
            <person name="Kuettner K.E."/>
            <person name="Caterson B."/>
        </authorList>
    </citation>
    <scope>NUCLEOTIDE SEQUENCE [MRNA] OF 39-90; 158-258 AND 1209-1295</scope>
    <scope>IDENTIFICATION (ISOFORM C)</scope>
</reference>
<reference key="6">
    <citation type="journal article" date="2004" name="Blood">
        <title>Hemangiopoietin, a novel human growth factor for the primitive cells of both hematopoietic and endothelial cell lineages.</title>
        <authorList>
            <person name="Liu Y.J."/>
            <person name="Lu S.H."/>
            <person name="Xu B."/>
            <person name="Yang R.C."/>
            <person name="Ren Q."/>
            <person name="Liu B."/>
            <person name="Li B."/>
            <person name="Lu M."/>
            <person name="Yan F.Y."/>
            <person name="Han Z.B."/>
            <person name="Han Z.C."/>
        </authorList>
    </citation>
    <scope>NUCLEOTIDE SEQUENCE [MRNA] OF 41-376 (ISOFORM F)</scope>
    <scope>FUNCTION</scope>
    <scope>SUBCELLULAR LOCATION</scope>
    <source>
        <tissue>Fetal liver</tissue>
    </source>
</reference>
<reference key="7">
    <citation type="journal article" date="1991" name="Blood">
        <title>Purification, biochemical characterization, and cloning of a novel megakaryocyte stimulating factor that has megakaryocyte colony stimulating activity.</title>
        <authorList>
            <person name="Turner K.J."/>
            <person name="Fitz L.J."/>
            <person name="Temple P."/>
            <person name="Jacobs K."/>
            <person name="Larson D."/>
            <person name="Leary A.C."/>
            <person name="Kelleher K."/>
            <person name="Giannotti J."/>
            <person name="Calvetti J."/>
            <person name="Fitzgerald M."/>
            <person name="Kriz M.-J."/>
            <person name="Ferenz C."/>
            <person name="Grobholz J."/>
            <person name="Fraser H."/>
            <person name="Bean K."/>
            <person name="Norton C.R."/>
            <person name="Gesner T."/>
            <person name="Bhatia S."/>
            <person name="Kriz R."/>
            <person name="Hewick R."/>
            <person name="Clark S.C."/>
        </authorList>
    </citation>
    <scope>PURIFICATION</scope>
    <source>
        <tissue>Urine</tissue>
    </source>
</reference>
<reference key="8">
    <citation type="book" date="1993" name="Biology of vitronectins and their receptors">
        <title>A comparison of vitronectin and megakaryocyte stimulating factor.</title>
        <editorList>
            <person name="Preissner K.T."/>
            <person name="Rosenblatt S."/>
            <person name="Kost C."/>
            <person name="Wegerhoff J."/>
            <person name="Mosher D.F."/>
        </editorList>
        <authorList>
            <person name="Merberg D.M."/>
            <person name="Fitz L.J."/>
            <person name="Temple P."/>
            <person name="Giannotti J."/>
            <person name="Murtha P."/>
            <person name="Fitzgerald M."/>
            <person name="Scaltreto H."/>
            <person name="Kelleher K."/>
            <person name="Preissner K."/>
            <person name="Kriz R."/>
            <person name="Jacobs K."/>
            <person name="Turner K."/>
        </authorList>
    </citation>
    <scope>GENE STRUCTURE</scope>
</reference>
<reference key="9">
    <citation type="journal article" date="1994" name="Arch. Biochem. Biophys.">
        <title>A novel proteoglycan synthesized and secreted by chondrocytes of the superficial zone of articular cartilage.</title>
        <authorList>
            <person name="Schumacher B.L."/>
            <person name="Block J.A."/>
            <person name="Schmid T.M."/>
            <person name="Aydelotte M.B."/>
            <person name="Kuettner K.E."/>
        </authorList>
    </citation>
    <scope>GLYCOSYLATION</scope>
</reference>
<reference key="10">
    <citation type="journal article" date="1999" name="Nat. Genet.">
        <title>CACP, encoding a secreted proteoglycan, is mutated in camptodactyly-arthropathy-coxa vara-pericarditis syndrome.</title>
        <authorList>
            <person name="Marcelino J."/>
            <person name="Carpten J.D."/>
            <person name="Suwairi W.M."/>
            <person name="Gutierrez O.M."/>
            <person name="Schwartz S."/>
            <person name="Robbins C."/>
            <person name="Sood R."/>
            <person name="Makalowska I."/>
            <person name="Baxevanis A."/>
            <person name="Johnstone B."/>
            <person name="Laxer R.M."/>
            <person name="Zemel L."/>
            <person name="Kim C.A."/>
            <person name="Herd J.K."/>
            <person name="Ihle J."/>
            <person name="Williams C."/>
            <person name="Johnson M."/>
            <person name="Raman V."/>
            <person name="Alonso L.G."/>
            <person name="Brunoni D."/>
            <person name="Gerstein A."/>
            <person name="Papadopoulos N."/>
            <person name="Bahabri S.A."/>
            <person name="Trent J.M."/>
            <person name="Warman M.L."/>
        </authorList>
    </citation>
    <scope>TISSUE SPECIFICITY</scope>
    <scope>INVOLVEMENT IN CACP</scope>
</reference>
<reference key="11">
    <citation type="journal article" date="2000" name="Cytogenet. Cell Genet.">
        <title>Isolation, characterization and mapping of the mouse and human PRG4 (proteoglycan 4) genes.</title>
        <authorList>
            <person name="Ikegawa S."/>
            <person name="Sano M."/>
            <person name="Koshizuka Y."/>
            <person name="Nakamura Y."/>
        </authorList>
    </citation>
    <scope>TISSUE SPECIFICITY</scope>
    <scope>IDENTIFICATION (ISOFORMS B; C AND D)</scope>
</reference>
<reference key="12">
    <citation type="journal article" date="2000" name="J. Rheumatol.">
        <title>Lubricin is a product of megakaryocyte stimulating factor gene expression by human synovial fibroblasts.</title>
        <authorList>
            <person name="Jay G.D."/>
            <person name="Britt D.E."/>
            <person name="Cha C.-J."/>
        </authorList>
    </citation>
    <scope>IDENTIFICATION BY MASS SPECTROMETRY</scope>
    <scope>FUNCTION</scope>
    <scope>GLYCOSYLATION</scope>
</reference>
<reference key="13">
    <citation type="journal article" date="2005" name="J. Proteome Res.">
        <title>Human plasma N-glycoproteome analysis by immunoaffinity subtraction, hydrazide chemistry, and mass spectrometry.</title>
        <authorList>
            <person name="Liu T."/>
            <person name="Qian W.-J."/>
            <person name="Gritsenko M.A."/>
            <person name="Camp D.G. II"/>
            <person name="Monroe M.E."/>
            <person name="Moore R.J."/>
            <person name="Smith R.D."/>
        </authorList>
    </citation>
    <scope>GLYCOSYLATION [LARGE SCALE ANALYSIS] AT ASN-1159</scope>
    <source>
        <tissue>Plasma</tissue>
    </source>
</reference>
<reference key="14">
    <citation type="journal article" date="2008" name="J. Proteome Res.">
        <title>Phosphoproteome of resting human platelets.</title>
        <authorList>
            <person name="Zahedi R.P."/>
            <person name="Lewandrowski U."/>
            <person name="Wiesner J."/>
            <person name="Wortelkamp S."/>
            <person name="Moebius J."/>
            <person name="Schuetz C."/>
            <person name="Walter U."/>
            <person name="Gambaryan S."/>
            <person name="Sickmann A."/>
        </authorList>
    </citation>
    <scope>IDENTIFICATION BY MASS SPECTROMETRY [LARGE SCALE ANALYSIS]</scope>
    <source>
        <tissue>Platelet</tissue>
    </source>
</reference>
<reference key="15">
    <citation type="journal article" date="2011" name="Sci. Signal.">
        <title>System-wide temporal characterization of the proteome and phosphoproteome of human embryonic stem cell differentiation.</title>
        <authorList>
            <person name="Rigbolt K.T."/>
            <person name="Prokhorova T.A."/>
            <person name="Akimov V."/>
            <person name="Henningsen J."/>
            <person name="Johansen P.T."/>
            <person name="Kratchmarova I."/>
            <person name="Kassem M."/>
            <person name="Mann M."/>
            <person name="Olsen J.V."/>
            <person name="Blagoev B."/>
        </authorList>
    </citation>
    <scope>IDENTIFICATION BY MASS SPECTROMETRY [LARGE SCALE ANALYSIS]</scope>
</reference>
<reference key="16">
    <citation type="journal article" date="2014" name="Mol. Cell. Proteomics">
        <title>The O-glycomap of lubricin, a novel mucin responsible for joint lubrication, identified by site-specific glycopeptide analysis.</title>
        <authorList>
            <person name="Ali L."/>
            <person name="Flowers S.A."/>
            <person name="Jin C."/>
            <person name="Bennet E.P."/>
            <person name="Ekwall A.K."/>
            <person name="Karlsson N.G."/>
        </authorList>
    </citation>
    <scope>GLYCOSYLATION AT SER-123; SER-136; THR-240; THR-253; THR-277; THR-291; THR-305; SER-306; THR-310; SER-317; THR-324; THR-332; THR-338; THR-367; SER-373; THR-376; THR-384; THR-385; SER-388; THR-391; THR-399; THR-400; THR-407; THR-408; THR-415; THR-423; SER-427; THR-430; THR-438; THR-439; THR-446; THR-447; THR-454; THR-455; THR-477; THR-478; THR-485; THR-493; THR-494; THR-501; THR-502; THR-509; THR-525; SER-529; THR-532; THR-540; THR-541; SER-553; THR-555; THR-563; THR-564; THR-571; THR-572; THR-579; THR-580; THR-587; THR-588; THR-595; THR-603; THR-604; THR-611; THR-612; THR-616; THR-619; THR-627; THR-676; THR-683; THR-684; THR-691; THR-692; THR-699; THR-700; THR-704; THR-707; THR-723; THR-724; THR-736; THR-768; THR-769; THR-776; THR-777; THR-792; THR-793; THR-805; SER-812; THR-829; THR-837; THR-838; SER-892; THR-900; THR-930; THR-931; SER-962; THR-963; THR-968; THR-975; THR-978; THR-979; THR-980; THR-1039 AND THR-1161</scope>
    <scope>IDENTIFICATION BY MASS SPECTROMETRY</scope>
</reference>
<reference key="17">
    <citation type="journal article" date="2020" name="Sci. Rep.">
        <title>Cathepsin g Degrades Both Glycosylated and Unglycosylated Regions of Lubricin, a Synovial Mucin.</title>
        <authorList>
            <person name="Huang S."/>
            <person name="Thomsson K.A."/>
            <person name="Jin C."/>
            <person name="Alweddi S."/>
            <person name="Struglics A."/>
            <person name="Rolfson O."/>
            <person name="Bjoerkman L.I."/>
            <person name="Kalamajski S."/>
            <person name="Schmidt T.A."/>
            <person name="Jay G.D."/>
            <person name="Krawetz R."/>
            <person name="Karlsson N.G."/>
            <person name="Eisler T."/>
        </authorList>
    </citation>
    <scope>SUBCELLULAR LOCATION</scope>
    <scope>PROTEOLYTIC CLEAVAGE</scope>
</reference>
<proteinExistence type="evidence at protein level"/>
<gene>
    <name type="primary">PRG4</name>
    <name type="synonym">MSF</name>
    <name type="synonym">SZP</name>
</gene>
<organism>
    <name type="scientific">Homo sapiens</name>
    <name type="common">Human</name>
    <dbReference type="NCBI Taxonomy" id="9606"/>
    <lineage>
        <taxon>Eukaryota</taxon>
        <taxon>Metazoa</taxon>
        <taxon>Chordata</taxon>
        <taxon>Craniata</taxon>
        <taxon>Vertebrata</taxon>
        <taxon>Euteleostomi</taxon>
        <taxon>Mammalia</taxon>
        <taxon>Eutheria</taxon>
        <taxon>Euarchontoglires</taxon>
        <taxon>Primates</taxon>
        <taxon>Haplorrhini</taxon>
        <taxon>Catarrhini</taxon>
        <taxon>Hominidae</taxon>
        <taxon>Homo</taxon>
    </lineage>
</organism>
<feature type="signal peptide" evidence="2">
    <location>
        <begin position="1"/>
        <end position="24"/>
    </location>
</feature>
<feature type="chain" id="PRO_0000043232" description="Proteoglycan 4">
    <location>
        <begin position="25"/>
        <end position="1404"/>
    </location>
</feature>
<feature type="chain" id="PRO_0000043233" description="Proteoglycan 4 C-terminal part">
    <location>
        <begin position="1307"/>
        <end position="1404"/>
    </location>
</feature>
<feature type="domain" description="SMB 1" evidence="3">
    <location>
        <begin position="26"/>
        <end position="69"/>
    </location>
</feature>
<feature type="domain" description="SMB 2" evidence="3">
    <location>
        <begin position="66"/>
        <end position="108"/>
    </location>
</feature>
<feature type="repeat" description="1">
    <location>
        <begin position="348"/>
        <end position="355"/>
    </location>
</feature>
<feature type="repeat" description="2; approximate">
    <location>
        <begin position="356"/>
        <end position="363"/>
    </location>
</feature>
<feature type="repeat" description="3">
    <location>
        <begin position="364"/>
        <end position="371"/>
    </location>
</feature>
<feature type="repeat" description="4; approximate">
    <location>
        <begin position="372"/>
        <end position="378"/>
    </location>
</feature>
<feature type="repeat" description="5">
    <location>
        <begin position="379"/>
        <end position="386"/>
    </location>
</feature>
<feature type="repeat" description="6; approximate">
    <location>
        <begin position="387"/>
        <end position="393"/>
    </location>
</feature>
<feature type="repeat" description="7">
    <location>
        <begin position="394"/>
        <end position="401"/>
    </location>
</feature>
<feature type="repeat" description="8">
    <location>
        <begin position="402"/>
        <end position="409"/>
    </location>
</feature>
<feature type="repeat" description="9">
    <location>
        <begin position="410"/>
        <end position="417"/>
    </location>
</feature>
<feature type="repeat" description="10">
    <location>
        <begin position="418"/>
        <end position="425"/>
    </location>
</feature>
<feature type="repeat" description="11; approximate">
    <location>
        <begin position="426"/>
        <end position="432"/>
    </location>
</feature>
<feature type="repeat" description="12">
    <location>
        <begin position="433"/>
        <end position="440"/>
    </location>
</feature>
<feature type="repeat" description="13">
    <location>
        <begin position="441"/>
        <end position="448"/>
    </location>
</feature>
<feature type="repeat" description="14">
    <location>
        <begin position="449"/>
        <end position="456"/>
    </location>
</feature>
<feature type="repeat" description="15">
    <location>
        <begin position="457"/>
        <end position="464"/>
    </location>
</feature>
<feature type="repeat" description="16; approximate">
    <location>
        <begin position="465"/>
        <end position="471"/>
    </location>
</feature>
<feature type="repeat" description="17">
    <location>
        <begin position="472"/>
        <end position="479"/>
    </location>
</feature>
<feature type="repeat" description="18; approximate">
    <location>
        <begin position="480"/>
        <end position="487"/>
    </location>
</feature>
<feature type="repeat" description="19; approximate">
    <location>
        <begin position="488"/>
        <end position="495"/>
    </location>
</feature>
<feature type="repeat" description="20">
    <location>
        <begin position="496"/>
        <end position="503"/>
    </location>
</feature>
<feature type="repeat" description="21">
    <location>
        <begin position="504"/>
        <end position="511"/>
    </location>
</feature>
<feature type="repeat" description="22">
    <location>
        <begin position="512"/>
        <end position="519"/>
    </location>
</feature>
<feature type="repeat" description="23">
    <location>
        <begin position="520"/>
        <end position="527"/>
    </location>
</feature>
<feature type="repeat" description="24; approximate">
    <location>
        <begin position="528"/>
        <end position="534"/>
    </location>
</feature>
<feature type="repeat" description="25">
    <location>
        <begin position="535"/>
        <end position="542"/>
    </location>
</feature>
<feature type="repeat" description="26; approximate">
    <location>
        <begin position="543"/>
        <end position="549"/>
    </location>
</feature>
<feature type="repeat" description="27">
    <location>
        <begin position="550"/>
        <end position="557"/>
    </location>
</feature>
<feature type="repeat" description="28">
    <location>
        <begin position="558"/>
        <end position="565"/>
    </location>
</feature>
<feature type="repeat" description="29">
    <location>
        <begin position="566"/>
        <end position="573"/>
    </location>
</feature>
<feature type="repeat" description="30">
    <location>
        <begin position="574"/>
        <end position="581"/>
    </location>
</feature>
<feature type="repeat" description="31">
    <location>
        <begin position="582"/>
        <end position="589"/>
    </location>
</feature>
<feature type="repeat" description="32">
    <location>
        <begin position="590"/>
        <end position="597"/>
    </location>
</feature>
<feature type="repeat" description="33; approximate">
    <location>
        <begin position="598"/>
        <end position="605"/>
    </location>
</feature>
<feature type="repeat" description="34">
    <location>
        <begin position="606"/>
        <end position="613"/>
    </location>
</feature>
<feature type="repeat" description="35; approximate">
    <location>
        <begin position="614"/>
        <end position="621"/>
    </location>
</feature>
<feature type="repeat" description="36; approximate">
    <location>
        <begin position="622"/>
        <end position="629"/>
    </location>
</feature>
<feature type="repeat" description="37; approximate">
    <location>
        <begin position="638"/>
        <end position="645"/>
    </location>
</feature>
<feature type="repeat" description="38; approximate">
    <location>
        <begin position="662"/>
        <end position="669"/>
    </location>
</feature>
<feature type="repeat" description="39">
    <location>
        <begin position="678"/>
        <end position="685"/>
    </location>
</feature>
<feature type="repeat" description="40">
    <location>
        <begin position="686"/>
        <end position="693"/>
    </location>
</feature>
<feature type="repeat" description="41">
    <location>
        <begin position="694"/>
        <end position="701"/>
    </location>
</feature>
<feature type="repeat" description="42; approximate">
    <location>
        <begin position="702"/>
        <end position="709"/>
    </location>
</feature>
<feature type="repeat" description="43; approximate">
    <location>
        <begin position="710"/>
        <end position="717"/>
    </location>
</feature>
<feature type="repeat" description="44">
    <location>
        <begin position="718"/>
        <end position="725"/>
    </location>
</feature>
<feature type="repeat" description="45; approximate">
    <location>
        <begin position="731"/>
        <end position="738"/>
    </location>
</feature>
<feature type="repeat" description="46; approximate">
    <location>
        <begin position="739"/>
        <end position="746"/>
    </location>
</feature>
<feature type="repeat" description="47; approximate">
    <location>
        <begin position="747"/>
        <end position="754"/>
    </location>
</feature>
<feature type="repeat" description="48; approximate">
    <location>
        <begin position="755"/>
        <end position="762"/>
    </location>
</feature>
<feature type="repeat" description="49">
    <location>
        <begin position="763"/>
        <end position="770"/>
    </location>
</feature>
<feature type="repeat" description="50">
    <location>
        <begin position="771"/>
        <end position="778"/>
    </location>
</feature>
<feature type="repeat" description="51; approximate">
    <location>
        <begin position="779"/>
        <end position="786"/>
    </location>
</feature>
<feature type="repeat" description="52">
    <location>
        <begin position="787"/>
        <end position="794"/>
    </location>
</feature>
<feature type="repeat" description="53; approximate">
    <location>
        <begin position="800"/>
        <end position="807"/>
    </location>
</feature>
<feature type="repeat" description="54; approximate">
    <location>
        <begin position="808"/>
        <end position="815"/>
    </location>
</feature>
<feature type="repeat" description="55; approximate">
    <location>
        <begin position="816"/>
        <end position="823"/>
    </location>
</feature>
<feature type="repeat" description="56; approximate">
    <location>
        <begin position="824"/>
        <end position="831"/>
    </location>
</feature>
<feature type="repeat" description="57">
    <location>
        <begin position="832"/>
        <end position="839"/>
    </location>
</feature>
<feature type="repeat" description="58">
    <location>
        <begin position="840"/>
        <end position="847"/>
    </location>
</feature>
<feature type="repeat" description="59; approximate">
    <location>
        <begin position="848"/>
        <end position="855"/>
    </location>
</feature>
<feature type="repeat" description="Hemopexin 1">
    <location>
        <begin position="1148"/>
        <end position="1191"/>
    </location>
</feature>
<feature type="repeat" description="Hemopexin 2">
    <location>
        <begin position="1192"/>
        <end position="1239"/>
    </location>
</feature>
<feature type="region of interest" description="Disordered" evidence="4">
    <location>
        <begin position="111"/>
        <end position="966"/>
    </location>
</feature>
<feature type="region of interest" description="59 X 8 AA repeats of K-X-P-X-P-T-T-X">
    <location>
        <begin position="348"/>
        <end position="855"/>
    </location>
</feature>
<feature type="region of interest" description="Disordered" evidence="4">
    <location>
        <begin position="992"/>
        <end position="1104"/>
    </location>
</feature>
<feature type="compositionally biased region" description="Basic residues" evidence="4">
    <location>
        <begin position="132"/>
        <end position="146"/>
    </location>
</feature>
<feature type="compositionally biased region" description="Low complexity" evidence="4">
    <location>
        <begin position="166"/>
        <end position="177"/>
    </location>
</feature>
<feature type="compositionally biased region" description="Basic and acidic residues" evidence="4">
    <location>
        <begin position="193"/>
        <end position="205"/>
    </location>
</feature>
<feature type="compositionally biased region" description="Polar residues" evidence="4">
    <location>
        <begin position="235"/>
        <end position="252"/>
    </location>
</feature>
<feature type="compositionally biased region" description="Polar residues" evidence="4">
    <location>
        <begin position="266"/>
        <end position="276"/>
    </location>
</feature>
<feature type="compositionally biased region" description="Low complexity" evidence="4">
    <location>
        <begin position="329"/>
        <end position="348"/>
    </location>
</feature>
<feature type="compositionally biased region" description="Low complexity" evidence="4">
    <location>
        <begin position="356"/>
        <end position="405"/>
    </location>
</feature>
<feature type="compositionally biased region" description="Low complexity" evidence="4">
    <location>
        <begin position="413"/>
        <end position="431"/>
    </location>
</feature>
<feature type="compositionally biased region" description="Pro residues" evidence="4">
    <location>
        <begin position="432"/>
        <end position="467"/>
    </location>
</feature>
<feature type="compositionally biased region" description="Pro residues" evidence="4">
    <location>
        <begin position="476"/>
        <end position="506"/>
    </location>
</feature>
<feature type="compositionally biased region" description="Low complexity" evidence="4">
    <location>
        <begin position="523"/>
        <end position="561"/>
    </location>
</feature>
<feature type="compositionally biased region" description="Pro residues" evidence="4">
    <location>
        <begin position="562"/>
        <end position="592"/>
    </location>
</feature>
<feature type="compositionally biased region" description="Pro residues" evidence="4">
    <location>
        <begin position="602"/>
        <end position="611"/>
    </location>
</feature>
<feature type="compositionally biased region" description="Low complexity" evidence="4">
    <location>
        <begin position="612"/>
        <end position="636"/>
    </location>
</feature>
<feature type="compositionally biased region" description="Pro residues" evidence="4">
    <location>
        <begin position="653"/>
        <end position="667"/>
    </location>
</feature>
<feature type="compositionally biased region" description="Pro residues" evidence="4">
    <location>
        <begin position="677"/>
        <end position="699"/>
    </location>
</feature>
<feature type="compositionally biased region" description="Low complexity" evidence="4">
    <location>
        <begin position="700"/>
        <end position="721"/>
    </location>
</feature>
<feature type="compositionally biased region" description="Low complexity" evidence="4">
    <location>
        <begin position="728"/>
        <end position="761"/>
    </location>
</feature>
<feature type="compositionally biased region" description="Pro residues" evidence="4">
    <location>
        <begin position="762"/>
        <end position="776"/>
    </location>
</feature>
<feature type="compositionally biased region" description="Low complexity" evidence="4">
    <location>
        <begin position="777"/>
        <end position="790"/>
    </location>
</feature>
<feature type="compositionally biased region" description="Low complexity" evidence="4">
    <location>
        <begin position="797"/>
        <end position="830"/>
    </location>
</feature>
<feature type="compositionally biased region" description="Pro residues" evidence="4">
    <location>
        <begin position="831"/>
        <end position="853"/>
    </location>
</feature>
<feature type="compositionally biased region" description="Low complexity" evidence="4">
    <location>
        <begin position="854"/>
        <end position="866"/>
    </location>
</feature>
<feature type="compositionally biased region" description="Low complexity" evidence="4">
    <location>
        <begin position="899"/>
        <end position="914"/>
    </location>
</feature>
<feature type="compositionally biased region" description="Basic and acidic residues" evidence="4">
    <location>
        <begin position="915"/>
        <end position="926"/>
    </location>
</feature>
<feature type="compositionally biased region" description="Low complexity" evidence="4">
    <location>
        <begin position="927"/>
        <end position="966"/>
    </location>
</feature>
<feature type="compositionally biased region" description="Basic and acidic residues" evidence="4">
    <location>
        <begin position="999"/>
        <end position="1012"/>
    </location>
</feature>
<feature type="compositionally biased region" description="Basic residues" evidence="4">
    <location>
        <begin position="1026"/>
        <end position="1047"/>
    </location>
</feature>
<feature type="compositionally biased region" description="Low complexity" evidence="4">
    <location>
        <begin position="1048"/>
        <end position="1060"/>
    </location>
</feature>
<feature type="compositionally biased region" description="Polar residues" evidence="4">
    <location>
        <begin position="1073"/>
        <end position="1085"/>
    </location>
</feature>
<feature type="site" description="Cleavage; by subtilisin-like proprotein convertase 4" evidence="1">
    <location>
        <begin position="1306"/>
        <end position="1307"/>
    </location>
</feature>
<feature type="glycosylation site" description="O-linked (GalNAc...) serine" evidence="9">
    <location>
        <position position="123"/>
    </location>
</feature>
<feature type="glycosylation site" description="O-linked (GalNAc...) serine" evidence="9">
    <location>
        <position position="136"/>
    </location>
</feature>
<feature type="glycosylation site" description="N-linked (GlcNAc...) asparagine" evidence="2">
    <location>
        <position position="206"/>
    </location>
</feature>
<feature type="glycosylation site" description="O-linked (GalNAc...) threonine" evidence="9">
    <location>
        <position position="240"/>
    </location>
</feature>
<feature type="glycosylation site" description="O-linked (GalNAc...) threonine" evidence="9">
    <location>
        <position position="253"/>
    </location>
</feature>
<feature type="glycosylation site" description="O-linked (GalNAc...) threonine" evidence="9">
    <location>
        <position position="277"/>
    </location>
</feature>
<feature type="glycosylation site" description="O-linked (GalNAc...) threonine" evidence="9">
    <location>
        <position position="291"/>
    </location>
</feature>
<feature type="glycosylation site" description="O-linked (GalNAc...) threonine" evidence="9">
    <location>
        <position position="305"/>
    </location>
</feature>
<feature type="glycosylation site" description="O-linked (GalNAc...) serine" evidence="9">
    <location>
        <position position="306"/>
    </location>
</feature>
<feature type="glycosylation site" description="O-linked (GalNAc...) threonine" evidence="9">
    <location>
        <position position="310"/>
    </location>
</feature>
<feature type="glycosylation site" description="O-linked (GalNAc...) serine" evidence="9">
    <location>
        <position position="317"/>
    </location>
</feature>
<feature type="glycosylation site" description="O-linked (GalNAc...) threonine" evidence="9">
    <location>
        <position position="324"/>
    </location>
</feature>
<feature type="glycosylation site" description="O-linked (GalNAc...) threonine" evidence="9">
    <location>
        <position position="332"/>
    </location>
</feature>
<feature type="glycosylation site" description="O-linked (GalNAc...) threonine" evidence="9">
    <location>
        <position position="338"/>
    </location>
</feature>
<feature type="glycosylation site" description="O-linked (GalNAc...) threonine" evidence="9">
    <location>
        <position position="367"/>
    </location>
</feature>
<feature type="glycosylation site" description="O-linked (GalNAc...) serine" evidence="9">
    <location>
        <position position="373"/>
    </location>
</feature>
<feature type="glycosylation site" description="O-linked (GalNAc...) threonine" evidence="9">
    <location>
        <position position="376"/>
    </location>
</feature>
<feature type="glycosylation site" description="O-linked (GalNAc...) threonine" evidence="9">
    <location>
        <position position="384"/>
    </location>
</feature>
<feature type="glycosylation site" description="O-linked (GalNAc...) threonine" evidence="9">
    <location>
        <position position="385"/>
    </location>
</feature>
<feature type="glycosylation site" description="O-linked (GalNAc...) serine" evidence="9">
    <location>
        <position position="388"/>
    </location>
</feature>
<feature type="glycosylation site" description="O-linked (GalNAc...) threonine" evidence="9">
    <location>
        <position position="391"/>
    </location>
</feature>
<feature type="glycosylation site" description="O-linked (GalNAc...) threonine" evidence="9">
    <location>
        <position position="399"/>
    </location>
</feature>
<feature type="glycosylation site" description="O-linked (GalNAc...) threonine" evidence="9">
    <location>
        <position position="400"/>
    </location>
</feature>
<feature type="glycosylation site" description="O-linked (GalNAc...) threonine" evidence="9">
    <location>
        <position position="407"/>
    </location>
</feature>
<feature type="glycosylation site" description="O-linked (GalNAc...) threonine" evidence="9">
    <location>
        <position position="408"/>
    </location>
</feature>
<feature type="glycosylation site" description="O-linked (GalNAc...) threonine" evidence="9">
    <location>
        <position position="415"/>
    </location>
</feature>
<feature type="glycosylation site" description="O-linked (GalNAc...) threonine" evidence="9">
    <location>
        <position position="423"/>
    </location>
</feature>
<feature type="glycosylation site" description="O-linked (GalNAc...) serine" evidence="9">
    <location>
        <position position="427"/>
    </location>
</feature>
<feature type="glycosylation site" description="O-linked (GalNAc...) threonine" evidence="9">
    <location>
        <position position="430"/>
    </location>
</feature>
<feature type="glycosylation site" description="O-linked (GalNAc...) threonine" evidence="9">
    <location>
        <position position="438"/>
    </location>
</feature>
<feature type="glycosylation site" description="O-linked (GalNAc...) threonine" evidence="9">
    <location>
        <position position="439"/>
    </location>
</feature>
<feature type="glycosylation site" description="O-linked (GalNAc...) threonine" evidence="9">
    <location>
        <position position="446"/>
    </location>
</feature>
<feature type="glycosylation site" description="O-linked (GalNAc...) threonine" evidence="9">
    <location>
        <position position="447"/>
    </location>
</feature>
<feature type="glycosylation site" description="O-linked (GalNAc...) threonine" evidence="9">
    <location>
        <position position="454"/>
    </location>
</feature>
<feature type="glycosylation site" description="O-linked (GalNAc...) threonine" evidence="9">
    <location>
        <position position="455"/>
    </location>
</feature>
<feature type="glycosylation site" description="O-linked (GalNAc...) threonine" evidence="9">
    <location>
        <position position="477"/>
    </location>
</feature>
<feature type="glycosylation site" description="O-linked (GalNAc...) threonine" evidence="9">
    <location>
        <position position="478"/>
    </location>
</feature>
<feature type="glycosylation site" description="O-linked (GalNAc...) threonine" evidence="9">
    <location>
        <position position="485"/>
    </location>
</feature>
<feature type="glycosylation site" description="O-linked (GalNAc...) threonine" evidence="9">
    <location>
        <position position="493"/>
    </location>
</feature>
<feature type="glycosylation site" description="O-linked (GalNAc...) threonine" evidence="9">
    <location>
        <position position="494"/>
    </location>
</feature>
<feature type="glycosylation site" description="O-linked (GalNAc...) threonine" evidence="9">
    <location>
        <position position="501"/>
    </location>
</feature>
<feature type="glycosylation site" description="O-linked (GalNAc...) threonine" evidence="9">
    <location>
        <position position="502"/>
    </location>
</feature>
<feature type="glycosylation site" description="O-linked (GalNAc...) threonine" evidence="9">
    <location>
        <position position="509"/>
    </location>
</feature>
<feature type="glycosylation site" description="O-linked (GalNAc...) threonine" evidence="9">
    <location>
        <position position="525"/>
    </location>
</feature>
<feature type="glycosylation site" description="O-linked (GalNAc...) serine" evidence="9">
    <location>
        <position position="529"/>
    </location>
</feature>
<feature type="glycosylation site" description="O-linked (GalNAc...) threonine" evidence="9">
    <location>
        <position position="532"/>
    </location>
</feature>
<feature type="glycosylation site" description="O-linked (GalNAc...) threonine" evidence="9">
    <location>
        <position position="540"/>
    </location>
</feature>
<feature type="glycosylation site" description="O-linked (GalNAc...) threonine" evidence="9">
    <location>
        <position position="541"/>
    </location>
</feature>
<feature type="glycosylation site" description="O-linked (GalNAc...) serine" evidence="9">
    <location>
        <position position="553"/>
    </location>
</feature>
<feature type="glycosylation site" description="O-linked (GalNAc...) threonine" evidence="9">
    <location>
        <position position="555"/>
    </location>
</feature>
<feature type="glycosylation site" description="O-linked (GalNAc...) threonine" evidence="9">
    <location>
        <position position="563"/>
    </location>
</feature>
<feature type="glycosylation site" description="O-linked (GalNAc...) threonine" evidence="9">
    <location>
        <position position="564"/>
    </location>
</feature>
<feature type="glycosylation site" description="O-linked (GalNAc...) threonine" evidence="9">
    <location>
        <position position="571"/>
    </location>
</feature>
<feature type="glycosylation site" description="O-linked (GalNAc...) threonine" evidence="9">
    <location>
        <position position="572"/>
    </location>
</feature>
<feature type="glycosylation site" description="O-linked (GalNAc...) threonine" evidence="9">
    <location>
        <position position="579"/>
    </location>
</feature>
<feature type="glycosylation site" description="O-linked (GalNAc...) threonine" evidence="9">
    <location>
        <position position="580"/>
    </location>
</feature>
<feature type="glycosylation site" description="O-linked (GalNAc...) threonine" evidence="9">
    <location>
        <position position="587"/>
    </location>
</feature>
<feature type="glycosylation site" description="O-linked (GalNAc...) threonine" evidence="9">
    <location>
        <position position="588"/>
    </location>
</feature>
<feature type="glycosylation site" description="O-linked (GalNAc...) threonine" evidence="9">
    <location>
        <position position="595"/>
    </location>
</feature>
<feature type="glycosylation site" description="O-linked (GalNAc...) threonine" evidence="9">
    <location>
        <position position="603"/>
    </location>
</feature>
<feature type="glycosylation site" description="O-linked (GalNAc...) threonine" evidence="9">
    <location>
        <position position="604"/>
    </location>
</feature>
<feature type="glycosylation site" description="O-linked (GalNAc...) threonine" evidence="9">
    <location>
        <position position="611"/>
    </location>
</feature>
<feature type="glycosylation site" description="O-linked (GalNAc...) threonine" evidence="9">
    <location>
        <position position="612"/>
    </location>
</feature>
<feature type="glycosylation site" description="O-linked (GalNAc...) threonine" evidence="9">
    <location>
        <position position="616"/>
    </location>
</feature>
<feature type="glycosylation site" description="O-linked (GalNAc...) threonine" evidence="9">
    <location>
        <position position="619"/>
    </location>
</feature>
<feature type="glycosylation site" description="O-linked (GalNAc...) threonine" evidence="9">
    <location>
        <position position="627"/>
    </location>
</feature>
<feature type="glycosylation site" description="O-linked (GalNAc...) threonine" evidence="9">
    <location>
        <position position="676"/>
    </location>
</feature>
<feature type="glycosylation site" description="O-linked (GalNAc...) threonine" evidence="9">
    <location>
        <position position="683"/>
    </location>
</feature>
<feature type="glycosylation site" description="O-linked (GalNAc...) threonine" evidence="9">
    <location>
        <position position="684"/>
    </location>
</feature>
<feature type="glycosylation site" description="O-linked (GalNAc...) threonine" evidence="9">
    <location>
        <position position="691"/>
    </location>
</feature>
<feature type="glycosylation site" description="O-linked (GalNAc...) threonine" evidence="9">
    <location>
        <position position="692"/>
    </location>
</feature>
<feature type="glycosylation site" description="O-linked (GalNAc...) threonine" evidence="9">
    <location>
        <position position="699"/>
    </location>
</feature>
<feature type="glycosylation site" description="O-linked (GalNAc...) threonine" evidence="9">
    <location>
        <position position="700"/>
    </location>
</feature>
<feature type="glycosylation site" description="O-linked (GalNAc...) threonine" evidence="9">
    <location>
        <position position="704"/>
    </location>
</feature>
<feature type="glycosylation site" description="O-linked (GalNAc...) threonine" evidence="9">
    <location>
        <position position="707"/>
    </location>
</feature>
<feature type="glycosylation site" description="O-linked (GalNAc...) threonine" evidence="9">
    <location>
        <position position="723"/>
    </location>
</feature>
<feature type="glycosylation site" description="O-linked (GalNAc...) threonine" evidence="9">
    <location>
        <position position="724"/>
    </location>
</feature>
<feature type="glycosylation site" description="O-linked (GalNAc...) threonine" evidence="9">
    <location>
        <position position="736"/>
    </location>
</feature>
<feature type="glycosylation site" description="O-linked (GalNAc...) threonine" evidence="9">
    <location>
        <position position="768"/>
    </location>
</feature>
<feature type="glycosylation site" description="O-linked (GalNAc...) threonine" evidence="9">
    <location>
        <position position="769"/>
    </location>
</feature>
<feature type="glycosylation site" description="O-linked (GalNAc...) threonine" evidence="9">
    <location>
        <position position="776"/>
    </location>
</feature>
<feature type="glycosylation site" description="O-linked (GalNAc...) threonine" evidence="9">
    <location>
        <position position="777"/>
    </location>
</feature>
<feature type="glycosylation site" description="O-linked (GalNAc...) threonine" evidence="9">
    <location>
        <position position="792"/>
    </location>
</feature>
<feature type="glycosylation site" description="O-linked (GalNAc...) threonine" evidence="9">
    <location>
        <position position="793"/>
    </location>
</feature>
<feature type="glycosylation site" description="O-linked (GalNAc...) threonine" evidence="9">
    <location>
        <position position="805"/>
    </location>
</feature>
<feature type="glycosylation site" description="O-linked (GalNAc...) serine" evidence="9">
    <location>
        <position position="812"/>
    </location>
</feature>
<feature type="glycosylation site" description="O-linked (GalNAc...) threonine" evidence="9">
    <location>
        <position position="829"/>
    </location>
</feature>
<feature type="glycosylation site" description="O-linked (GalNAc...) threonine" evidence="9">
    <location>
        <position position="837"/>
    </location>
</feature>
<feature type="glycosylation site" description="O-linked (GalNAc...) threonine" evidence="9">
    <location>
        <position position="838"/>
    </location>
</feature>
<feature type="glycosylation site" description="O-linked (GalNAc...) serine" evidence="9">
    <location>
        <position position="892"/>
    </location>
</feature>
<feature type="glycosylation site" description="O-linked (GalNAc...) threonine" evidence="9">
    <location>
        <position position="900"/>
    </location>
</feature>
<feature type="glycosylation site" description="O-linked (GalNAc...) threonine" evidence="9">
    <location>
        <position position="930"/>
    </location>
</feature>
<feature type="glycosylation site" description="O-linked (GalNAc...) threonine" evidence="9">
    <location>
        <position position="931"/>
    </location>
</feature>
<feature type="glycosylation site" description="O-linked (GalNAc...) serine" evidence="9">
    <location>
        <position position="962"/>
    </location>
</feature>
<feature type="glycosylation site" description="O-linked (GalNAc...) threonine" evidence="9">
    <location>
        <position position="963"/>
    </location>
</feature>
<feature type="glycosylation site" description="O-linked (GalNAc...) threonine" evidence="9">
    <location>
        <position position="968"/>
    </location>
</feature>
<feature type="glycosylation site" description="O-linked (GalNAc...) threonine" evidence="9">
    <location>
        <position position="975"/>
    </location>
</feature>
<feature type="glycosylation site" description="O-linked (GalNAc...) threonine" evidence="9">
    <location>
        <position position="978"/>
    </location>
</feature>
<feature type="glycosylation site" description="O-linked (GalNAc...) threonine" evidence="9">
    <location>
        <position position="979"/>
    </location>
</feature>
<feature type="glycosylation site" description="O-linked (GalNAc...) threonine" evidence="9">
    <location>
        <position position="980"/>
    </location>
</feature>
<feature type="glycosylation site" description="O-linked (GalNAc...) threonine" evidence="9">
    <location>
        <position position="1039"/>
    </location>
</feature>
<feature type="glycosylation site" description="N-linked (GlcNAc...) asparagine" evidence="8">
    <location>
        <position position="1159"/>
    </location>
</feature>
<feature type="glycosylation site" description="O-linked (GalNAc...) threonine" evidence="9">
    <location>
        <position position="1161"/>
    </location>
</feature>
<feature type="disulfide bond" evidence="3">
    <location>
        <begin position="30"/>
        <end position="46"/>
    </location>
</feature>
<feature type="disulfide bond" evidence="3">
    <location>
        <begin position="30"/>
        <end position="34"/>
    </location>
</feature>
<feature type="disulfide bond" evidence="3">
    <location>
        <begin position="34"/>
        <end position="64"/>
    </location>
</feature>
<feature type="disulfide bond" evidence="3">
    <location>
        <begin position="44"/>
        <end position="57"/>
    </location>
</feature>
<feature type="disulfide bond" evidence="3">
    <location>
        <begin position="44"/>
        <end position="46"/>
    </location>
</feature>
<feature type="disulfide bond" evidence="3">
    <location>
        <begin position="50"/>
        <end position="56"/>
    </location>
</feature>
<feature type="disulfide bond" evidence="3">
    <location>
        <begin position="57"/>
        <end position="64"/>
    </location>
</feature>
<feature type="disulfide bond" description="Alternate" evidence="3">
    <location>
        <begin position="70"/>
        <end position="86"/>
    </location>
</feature>
<feature type="disulfide bond" description="Alternate" evidence="3">
    <location>
        <begin position="70"/>
        <end position="74"/>
    </location>
</feature>
<feature type="disulfide bond" description="Alternate" evidence="3">
    <location>
        <begin position="74"/>
        <end position="104"/>
    </location>
</feature>
<feature type="disulfide bond" description="Alternate" evidence="3">
    <location>
        <begin position="84"/>
        <end position="97"/>
    </location>
</feature>
<feature type="disulfide bond" description="Alternate" evidence="3">
    <location>
        <begin position="84"/>
        <end position="86"/>
    </location>
</feature>
<feature type="disulfide bond" evidence="3">
    <location>
        <begin position="90"/>
        <end position="96"/>
    </location>
</feature>
<feature type="disulfide bond" description="Alternate" evidence="3">
    <location>
        <begin position="97"/>
        <end position="104"/>
    </location>
</feature>
<feature type="disulfide bond" evidence="3">
    <location>
        <begin position="1146"/>
        <end position="1403"/>
    </location>
</feature>
<feature type="splice variant" id="VSP_016467" description="In isoform B, isoform D and isoform E." evidence="12">
    <location>
        <begin position="26"/>
        <end position="66"/>
    </location>
</feature>
<feature type="splice variant" id="VSP_016468" description="In isoform C and isoform D." evidence="14">
    <location>
        <begin position="107"/>
        <end position="199"/>
    </location>
</feature>
<feature type="splice variant" id="VSP_016469" description="In isoform F." evidence="13">
    <location>
        <begin position="157"/>
        <end position="199"/>
    </location>
</feature>
<feature type="splice variant" id="VSP_016470" description="In isoform E." evidence="12">
    <location>
        <begin position="412"/>
        <end position="841"/>
    </location>
</feature>
<feature type="sequence variant" id="VAR_024023" description="In dbSNP:rs2273779." evidence="11">
    <original>R</original>
    <variation>W</variation>
    <location>
        <position position="180"/>
    </location>
</feature>
<feature type="sequence variant" id="VAR_051559" description="In dbSNP:rs10158395.">
    <original>N</original>
    <variation>S</variation>
    <location>
        <position position="1130"/>
    </location>
</feature>
<feature type="sequence variant" id="VAR_051560" description="In dbSNP:rs1293985.">
    <original>I</original>
    <variation>T</variation>
    <location>
        <position position="1272"/>
    </location>
</feature>
<feature type="sequence variant" id="VAR_051561" description="In dbSNP:rs12134934." evidence="11">
    <original>T</original>
    <variation>M</variation>
    <location>
        <position position="1296"/>
    </location>
</feature>
<feature type="sequence conflict" description="In Ref. 1; AAB09089." evidence="14" ref="1">
    <original>T</original>
    <variation>A</variation>
    <location>
        <position position="604"/>
    </location>
</feature>
<feature type="sequence conflict" description="In Ref. 4; AAT74746." evidence="14" ref="4">
    <original>S</original>
    <variation>G</variation>
    <location>
        <position position="1340"/>
    </location>
</feature>
<feature type="sequence conflict" description="In Ref. 4; AAT74746." evidence="14" ref="4">
    <original>V</original>
    <variation>G</variation>
    <location>
        <position position="1380"/>
    </location>
</feature>
<feature type="sequence conflict" description="In Ref. 4; AAT74746." evidence="14" ref="4">
    <original>SKVWYNCP</original>
    <variation>FK</variation>
    <location>
        <begin position="1397"/>
        <end position="1404"/>
    </location>
</feature>